<organism>
    <name type="scientific">Pyrobaculum aerophilum (strain ATCC 51768 / DSM 7523 / JCM 9630 / CIP 104966 / NBRC 100827 / IM2)</name>
    <dbReference type="NCBI Taxonomy" id="178306"/>
    <lineage>
        <taxon>Archaea</taxon>
        <taxon>Thermoproteota</taxon>
        <taxon>Thermoprotei</taxon>
        <taxon>Thermoproteales</taxon>
        <taxon>Thermoproteaceae</taxon>
        <taxon>Pyrobaculum</taxon>
    </lineage>
</organism>
<dbReference type="EC" id="3.5.4.19" evidence="1"/>
<dbReference type="EMBL" id="AE009441">
    <property type="protein sequence ID" value="AAL63157.1"/>
    <property type="molecule type" value="Genomic_DNA"/>
</dbReference>
<dbReference type="RefSeq" id="WP_011007629.1">
    <property type="nucleotide sequence ID" value="NC_003364.1"/>
</dbReference>
<dbReference type="SMR" id="Q8ZY39"/>
<dbReference type="FunCoup" id="Q8ZY39">
    <property type="interactions" value="75"/>
</dbReference>
<dbReference type="STRING" id="178306.PAE0957"/>
<dbReference type="EnsemblBacteria" id="AAL63157">
    <property type="protein sequence ID" value="AAL63157"/>
    <property type="gene ID" value="PAE0957"/>
</dbReference>
<dbReference type="GeneID" id="1465392"/>
<dbReference type="KEGG" id="pai:PAE0957"/>
<dbReference type="PATRIC" id="fig|178306.9.peg.709"/>
<dbReference type="eggNOG" id="arCOG02676">
    <property type="taxonomic scope" value="Archaea"/>
</dbReference>
<dbReference type="HOGENOM" id="CLU_048577_5_1_2"/>
<dbReference type="InParanoid" id="Q8ZY39"/>
<dbReference type="UniPathway" id="UPA00031">
    <property type="reaction ID" value="UER00008"/>
</dbReference>
<dbReference type="Proteomes" id="UP000002439">
    <property type="component" value="Chromosome"/>
</dbReference>
<dbReference type="GO" id="GO:0005737">
    <property type="term" value="C:cytoplasm"/>
    <property type="evidence" value="ECO:0007669"/>
    <property type="project" value="UniProtKB-SubCell"/>
</dbReference>
<dbReference type="GO" id="GO:0000287">
    <property type="term" value="F:magnesium ion binding"/>
    <property type="evidence" value="ECO:0007669"/>
    <property type="project" value="UniProtKB-UniRule"/>
</dbReference>
<dbReference type="GO" id="GO:0004635">
    <property type="term" value="F:phosphoribosyl-AMP cyclohydrolase activity"/>
    <property type="evidence" value="ECO:0007669"/>
    <property type="project" value="UniProtKB-UniRule"/>
</dbReference>
<dbReference type="GO" id="GO:0008270">
    <property type="term" value="F:zinc ion binding"/>
    <property type="evidence" value="ECO:0007669"/>
    <property type="project" value="UniProtKB-UniRule"/>
</dbReference>
<dbReference type="GO" id="GO:0000105">
    <property type="term" value="P:L-histidine biosynthetic process"/>
    <property type="evidence" value="ECO:0007669"/>
    <property type="project" value="UniProtKB-UniRule"/>
</dbReference>
<dbReference type="FunFam" id="3.10.20.810:FF:000001">
    <property type="entry name" value="Histidine biosynthesis bifunctional protein HisIE"/>
    <property type="match status" value="1"/>
</dbReference>
<dbReference type="Gene3D" id="3.10.20.810">
    <property type="entry name" value="Phosphoribosyl-AMP cyclohydrolase"/>
    <property type="match status" value="1"/>
</dbReference>
<dbReference type="HAMAP" id="MF_01021">
    <property type="entry name" value="HisI"/>
    <property type="match status" value="1"/>
</dbReference>
<dbReference type="InterPro" id="IPR026660">
    <property type="entry name" value="PRA-CH"/>
</dbReference>
<dbReference type="InterPro" id="IPR002496">
    <property type="entry name" value="PRib_AMP_CycHydrolase_dom"/>
</dbReference>
<dbReference type="InterPro" id="IPR038019">
    <property type="entry name" value="PRib_AMP_CycHydrolase_sf"/>
</dbReference>
<dbReference type="NCBIfam" id="NF000768">
    <property type="entry name" value="PRK00051.1"/>
    <property type="match status" value="1"/>
</dbReference>
<dbReference type="PANTHER" id="PTHR42945">
    <property type="entry name" value="HISTIDINE BIOSYNTHESIS BIFUNCTIONAL PROTEIN"/>
    <property type="match status" value="1"/>
</dbReference>
<dbReference type="PANTHER" id="PTHR42945:SF1">
    <property type="entry name" value="HISTIDINE BIOSYNTHESIS BIFUNCTIONAL PROTEIN HIS7"/>
    <property type="match status" value="1"/>
</dbReference>
<dbReference type="Pfam" id="PF01502">
    <property type="entry name" value="PRA-CH"/>
    <property type="match status" value="1"/>
</dbReference>
<dbReference type="SUPFAM" id="SSF141734">
    <property type="entry name" value="HisI-like"/>
    <property type="match status" value="1"/>
</dbReference>
<accession>Q8ZY39</accession>
<keyword id="KW-0028">Amino-acid biosynthesis</keyword>
<keyword id="KW-0963">Cytoplasm</keyword>
<keyword id="KW-0368">Histidine biosynthesis</keyword>
<keyword id="KW-0378">Hydrolase</keyword>
<keyword id="KW-0460">Magnesium</keyword>
<keyword id="KW-0479">Metal-binding</keyword>
<keyword id="KW-1185">Reference proteome</keyword>
<keyword id="KW-0862">Zinc</keyword>
<protein>
    <recommendedName>
        <fullName evidence="1">Phosphoribosyl-AMP cyclohydrolase</fullName>
        <shortName evidence="1">PRA-CH</shortName>
        <ecNumber evidence="1">3.5.4.19</ecNumber>
    </recommendedName>
</protein>
<sequence>MEARPLATPEEAWRIASSLRYRHIEGTVVAVVQDVETKEVLMVGHMDPIAVVLTLTTGLAHYYSTTRKRIWLKGETSGHYQIVKEFRSDCDGDAVVIKVVQIGAACHTGSRSCFESKYSLIKALKLSLRHG</sequence>
<gene>
    <name evidence="1" type="primary">hisI</name>
    <name type="ordered locus">PAE0957</name>
</gene>
<comment type="function">
    <text evidence="1">Catalyzes the hydrolysis of the adenine ring of phosphoribosyl-AMP.</text>
</comment>
<comment type="catalytic activity">
    <reaction evidence="1">
        <text>1-(5-phospho-beta-D-ribosyl)-5'-AMP + H2O = 1-(5-phospho-beta-D-ribosyl)-5-[(5-phospho-beta-D-ribosylamino)methylideneamino]imidazole-4-carboxamide</text>
        <dbReference type="Rhea" id="RHEA:20049"/>
        <dbReference type="ChEBI" id="CHEBI:15377"/>
        <dbReference type="ChEBI" id="CHEBI:58435"/>
        <dbReference type="ChEBI" id="CHEBI:59457"/>
        <dbReference type="EC" id="3.5.4.19"/>
    </reaction>
</comment>
<comment type="cofactor">
    <cofactor evidence="1">
        <name>Mg(2+)</name>
        <dbReference type="ChEBI" id="CHEBI:18420"/>
    </cofactor>
    <text evidence="1">Binds 1 Mg(2+) ion per subunit.</text>
</comment>
<comment type="cofactor">
    <cofactor evidence="1">
        <name>Zn(2+)</name>
        <dbReference type="ChEBI" id="CHEBI:29105"/>
    </cofactor>
    <text evidence="1">Binds 1 zinc ion per subunit.</text>
</comment>
<comment type="pathway">
    <text evidence="1">Amino-acid biosynthesis; L-histidine biosynthesis; L-histidine from 5-phospho-alpha-D-ribose 1-diphosphate: step 3/9.</text>
</comment>
<comment type="subunit">
    <text evidence="1">Homodimer.</text>
</comment>
<comment type="subcellular location">
    <subcellularLocation>
        <location evidence="1">Cytoplasm</location>
    </subcellularLocation>
</comment>
<comment type="similarity">
    <text evidence="1">Belongs to the PRA-CH family.</text>
</comment>
<reference key="1">
    <citation type="journal article" date="2002" name="Proc. Natl. Acad. Sci. U.S.A.">
        <title>Genome sequence of the hyperthermophilic crenarchaeon Pyrobaculum aerophilum.</title>
        <authorList>
            <person name="Fitz-Gibbon S.T."/>
            <person name="Ladner H."/>
            <person name="Kim U.-J."/>
            <person name="Stetter K.O."/>
            <person name="Simon M.I."/>
            <person name="Miller J.H."/>
        </authorList>
    </citation>
    <scope>NUCLEOTIDE SEQUENCE [LARGE SCALE GENOMIC DNA]</scope>
    <source>
        <strain>ATCC 51768 / DSM 7523 / JCM 9630 / CIP 104966 / NBRC 100827 / IM2</strain>
    </source>
</reference>
<evidence type="ECO:0000255" key="1">
    <source>
        <dbReference type="HAMAP-Rule" id="MF_01021"/>
    </source>
</evidence>
<proteinExistence type="inferred from homology"/>
<feature type="chain" id="PRO_0000136513" description="Phosphoribosyl-AMP cyclohydrolase">
    <location>
        <begin position="1"/>
        <end position="131"/>
    </location>
</feature>
<feature type="binding site" evidence="1">
    <location>
        <position position="89"/>
    </location>
    <ligand>
        <name>Mg(2+)</name>
        <dbReference type="ChEBI" id="CHEBI:18420"/>
    </ligand>
</feature>
<feature type="binding site" evidence="1">
    <location>
        <position position="90"/>
    </location>
    <ligand>
        <name>Zn(2+)</name>
        <dbReference type="ChEBI" id="CHEBI:29105"/>
        <note>ligand shared between dimeric partners</note>
    </ligand>
</feature>
<feature type="binding site" evidence="1">
    <location>
        <position position="91"/>
    </location>
    <ligand>
        <name>Mg(2+)</name>
        <dbReference type="ChEBI" id="CHEBI:18420"/>
    </ligand>
</feature>
<feature type="binding site" evidence="1">
    <location>
        <position position="93"/>
    </location>
    <ligand>
        <name>Mg(2+)</name>
        <dbReference type="ChEBI" id="CHEBI:18420"/>
    </ligand>
</feature>
<feature type="binding site" evidence="1">
    <location>
        <position position="106"/>
    </location>
    <ligand>
        <name>Zn(2+)</name>
        <dbReference type="ChEBI" id="CHEBI:29105"/>
        <note>ligand shared between dimeric partners</note>
    </ligand>
</feature>
<feature type="binding site" evidence="1">
    <location>
        <position position="113"/>
    </location>
    <ligand>
        <name>Zn(2+)</name>
        <dbReference type="ChEBI" id="CHEBI:29105"/>
        <note>ligand shared between dimeric partners</note>
    </ligand>
</feature>
<name>HIS3_PYRAE</name>